<accession>C1FA47</accession>
<organism>
    <name type="scientific">Acidobacterium capsulatum (strain ATCC 51196 / DSM 11244 / BCRC 80197 / JCM 7670 / NBRC 15755 / NCIMB 13165 / 161)</name>
    <dbReference type="NCBI Taxonomy" id="240015"/>
    <lineage>
        <taxon>Bacteria</taxon>
        <taxon>Pseudomonadati</taxon>
        <taxon>Acidobacteriota</taxon>
        <taxon>Terriglobia</taxon>
        <taxon>Terriglobales</taxon>
        <taxon>Acidobacteriaceae</taxon>
        <taxon>Acidobacterium</taxon>
    </lineage>
</organism>
<feature type="chain" id="PRO_1000190726" description="Potassium-transporting ATPase potassium-binding subunit">
    <location>
        <begin position="1"/>
        <end position="590"/>
    </location>
</feature>
<feature type="transmembrane region" description="Helical" evidence="1">
    <location>
        <begin position="11"/>
        <end position="31"/>
    </location>
</feature>
<feature type="transmembrane region" description="Helical" evidence="1">
    <location>
        <begin position="64"/>
        <end position="84"/>
    </location>
</feature>
<feature type="transmembrane region" description="Helical" evidence="1">
    <location>
        <begin position="136"/>
        <end position="156"/>
    </location>
</feature>
<feature type="transmembrane region" description="Helical" evidence="1">
    <location>
        <begin position="178"/>
        <end position="198"/>
    </location>
</feature>
<feature type="transmembrane region" description="Helical" evidence="1">
    <location>
        <begin position="273"/>
        <end position="293"/>
    </location>
</feature>
<feature type="transmembrane region" description="Helical" evidence="1">
    <location>
        <begin position="301"/>
        <end position="321"/>
    </location>
</feature>
<feature type="transmembrane region" description="Helical" evidence="1">
    <location>
        <begin position="403"/>
        <end position="423"/>
    </location>
</feature>
<feature type="transmembrane region" description="Helical" evidence="1">
    <location>
        <begin position="442"/>
        <end position="462"/>
    </location>
</feature>
<feature type="transmembrane region" description="Helical" evidence="1">
    <location>
        <begin position="511"/>
        <end position="531"/>
    </location>
</feature>
<feature type="transmembrane region" description="Helical" evidence="1">
    <location>
        <begin position="552"/>
        <end position="572"/>
    </location>
</feature>
<evidence type="ECO:0000255" key="1">
    <source>
        <dbReference type="HAMAP-Rule" id="MF_00275"/>
    </source>
</evidence>
<gene>
    <name evidence="1" type="primary">kdpA</name>
    <name type="ordered locus">ACP_0429</name>
</gene>
<comment type="function">
    <text evidence="1">Part of the high-affinity ATP-driven potassium transport (or Kdp) system, which catalyzes the hydrolysis of ATP coupled with the electrogenic transport of potassium into the cytoplasm. This subunit binds the periplasmic potassium ions and delivers the ions to the membrane domain of KdpB through an intramembrane tunnel.</text>
</comment>
<comment type="subunit">
    <text evidence="1">The system is composed of three essential subunits: KdpA, KdpB and KdpC.</text>
</comment>
<comment type="subcellular location">
    <subcellularLocation>
        <location evidence="1">Cell inner membrane</location>
        <topology evidence="1">Multi-pass membrane protein</topology>
    </subcellularLocation>
</comment>
<comment type="similarity">
    <text evidence="1">Belongs to the KdpA family.</text>
</comment>
<proteinExistence type="inferred from homology"/>
<protein>
    <recommendedName>
        <fullName evidence="1">Potassium-transporting ATPase potassium-binding subunit</fullName>
    </recommendedName>
    <alternativeName>
        <fullName evidence="1">ATP phosphohydrolase [potassium-transporting] A chain</fullName>
    </alternativeName>
    <alternativeName>
        <fullName evidence="1">Potassium-binding and translocating subunit A</fullName>
    </alternativeName>
    <alternativeName>
        <fullName evidence="1">Potassium-translocating ATPase A chain</fullName>
    </alternativeName>
</protein>
<sequence length="590" mass="63326">MTVNGWLQIGIFIAAVLLGAKPLGVYMAAVFERRHTWLDPVLVPVEKLLYRLTAVKAEEEMHWTAYCASMLIFSAATMLLTYLIERVQQFLPLNPQHLGGVPAQLAWNTAISFTTNTNWQAYTPESTMSYLTQMVGLATHNFWSAAVGIALAIAFIRGIARKEMKTLGNFWVDMTRAILWVLLPICVVFALVLTSQGVIQNLKSYTVAHVVQPQSQTQTVNGKTVTTTDSTQTIAQGPVASQEAIKMLGTNGGGFFNANSSHPFENPTPLSNMLEMISIFLIPAGLTVTLGQMTGSPRHGWAVLGAMLILWFAGVATCYWAEAQPNPLFHGVNQQATALQAGGNMEGKEVRFGIADSALFATVTTDASCGAVNAMHDSFMPLGGMVPLTNIMLGEIVFGGVGAGLYGMLVFVIVAVFIAGLMVGRTPEYLGNKIQAYDVQMAMLYLLIFPLIILGFSAVAVLTPHLGLPSISNPGPHGLTQILYAYSSATGNNGSAFAGLNANTSWYNLSLGFAMFIGRFLMIVPMLALAGNLAQKKNVPETLGTFPVTTPLFTVLLTSVIIVVGALTFLPALSLGPILEHLLLQAGRTF</sequence>
<dbReference type="EMBL" id="CP001472">
    <property type="protein sequence ID" value="ACO31481.1"/>
    <property type="molecule type" value="Genomic_DNA"/>
</dbReference>
<dbReference type="RefSeq" id="WP_012680823.1">
    <property type="nucleotide sequence ID" value="NC_012483.1"/>
</dbReference>
<dbReference type="SMR" id="C1FA47"/>
<dbReference type="FunCoup" id="C1FA47">
    <property type="interactions" value="171"/>
</dbReference>
<dbReference type="STRING" id="240015.ACP_0429"/>
<dbReference type="KEGG" id="aca:ACP_0429"/>
<dbReference type="eggNOG" id="COG2060">
    <property type="taxonomic scope" value="Bacteria"/>
</dbReference>
<dbReference type="HOGENOM" id="CLU_018614_3_0_0"/>
<dbReference type="InParanoid" id="C1FA47"/>
<dbReference type="OrthoDB" id="9763796at2"/>
<dbReference type="Proteomes" id="UP000002207">
    <property type="component" value="Chromosome"/>
</dbReference>
<dbReference type="GO" id="GO:0005886">
    <property type="term" value="C:plasma membrane"/>
    <property type="evidence" value="ECO:0007669"/>
    <property type="project" value="UniProtKB-SubCell"/>
</dbReference>
<dbReference type="GO" id="GO:0008556">
    <property type="term" value="F:P-type potassium transmembrane transporter activity"/>
    <property type="evidence" value="ECO:0007669"/>
    <property type="project" value="InterPro"/>
</dbReference>
<dbReference type="GO" id="GO:0030955">
    <property type="term" value="F:potassium ion binding"/>
    <property type="evidence" value="ECO:0007669"/>
    <property type="project" value="UniProtKB-UniRule"/>
</dbReference>
<dbReference type="HAMAP" id="MF_00275">
    <property type="entry name" value="KdpA"/>
    <property type="match status" value="1"/>
</dbReference>
<dbReference type="InterPro" id="IPR004623">
    <property type="entry name" value="KdpA"/>
</dbReference>
<dbReference type="NCBIfam" id="TIGR00680">
    <property type="entry name" value="kdpA"/>
    <property type="match status" value="1"/>
</dbReference>
<dbReference type="PANTHER" id="PTHR30607">
    <property type="entry name" value="POTASSIUM-TRANSPORTING ATPASE A CHAIN"/>
    <property type="match status" value="1"/>
</dbReference>
<dbReference type="PANTHER" id="PTHR30607:SF2">
    <property type="entry name" value="POTASSIUM-TRANSPORTING ATPASE POTASSIUM-BINDING SUBUNIT"/>
    <property type="match status" value="1"/>
</dbReference>
<dbReference type="Pfam" id="PF03814">
    <property type="entry name" value="KdpA"/>
    <property type="match status" value="1"/>
</dbReference>
<dbReference type="PIRSF" id="PIRSF001294">
    <property type="entry name" value="K_ATPaseA"/>
    <property type="match status" value="1"/>
</dbReference>
<name>KDPA_ACIC5</name>
<keyword id="KW-0997">Cell inner membrane</keyword>
<keyword id="KW-1003">Cell membrane</keyword>
<keyword id="KW-0406">Ion transport</keyword>
<keyword id="KW-0472">Membrane</keyword>
<keyword id="KW-0630">Potassium</keyword>
<keyword id="KW-0633">Potassium transport</keyword>
<keyword id="KW-1185">Reference proteome</keyword>
<keyword id="KW-0812">Transmembrane</keyword>
<keyword id="KW-1133">Transmembrane helix</keyword>
<keyword id="KW-0813">Transport</keyword>
<reference key="1">
    <citation type="journal article" date="2009" name="Appl. Environ. Microbiol.">
        <title>Three genomes from the phylum Acidobacteria provide insight into the lifestyles of these microorganisms in soils.</title>
        <authorList>
            <person name="Ward N.L."/>
            <person name="Challacombe J.F."/>
            <person name="Janssen P.H."/>
            <person name="Henrissat B."/>
            <person name="Coutinho P.M."/>
            <person name="Wu M."/>
            <person name="Xie G."/>
            <person name="Haft D.H."/>
            <person name="Sait M."/>
            <person name="Badger J."/>
            <person name="Barabote R.D."/>
            <person name="Bradley B."/>
            <person name="Brettin T.S."/>
            <person name="Brinkac L.M."/>
            <person name="Bruce D."/>
            <person name="Creasy T."/>
            <person name="Daugherty S.C."/>
            <person name="Davidsen T.M."/>
            <person name="DeBoy R.T."/>
            <person name="Detter J.C."/>
            <person name="Dodson R.J."/>
            <person name="Durkin A.S."/>
            <person name="Ganapathy A."/>
            <person name="Gwinn-Giglio M."/>
            <person name="Han C.S."/>
            <person name="Khouri H."/>
            <person name="Kiss H."/>
            <person name="Kothari S.P."/>
            <person name="Madupu R."/>
            <person name="Nelson K.E."/>
            <person name="Nelson W.C."/>
            <person name="Paulsen I."/>
            <person name="Penn K."/>
            <person name="Ren Q."/>
            <person name="Rosovitz M.J."/>
            <person name="Selengut J.D."/>
            <person name="Shrivastava S."/>
            <person name="Sullivan S.A."/>
            <person name="Tapia R."/>
            <person name="Thompson L.S."/>
            <person name="Watkins K.L."/>
            <person name="Yang Q."/>
            <person name="Yu C."/>
            <person name="Zafar N."/>
            <person name="Zhou L."/>
            <person name="Kuske C.R."/>
        </authorList>
    </citation>
    <scope>NUCLEOTIDE SEQUENCE [LARGE SCALE GENOMIC DNA]</scope>
    <source>
        <strain>ATCC 51196 / DSM 11244 / BCRC 80197 / JCM 7670 / NBRC 15755 / NCIMB 13165 / 161</strain>
    </source>
</reference>